<comment type="function">
    <text>Has nitric oxide reductase activity in combination with FprA; probably involved in nitrosative stress protection. Acts as an NADH:FprA oxidoreductase.</text>
</comment>
<comment type="cofactor">
    <cofactor evidence="2">
        <name>Fe cation</name>
        <dbReference type="ChEBI" id="CHEBI:24875"/>
    </cofactor>
    <text evidence="2">Binds 2 iron ions per homodimer.</text>
</comment>
<comment type="cofactor">
    <cofactor evidence="2">
        <name>FMN</name>
        <dbReference type="ChEBI" id="CHEBI:58210"/>
    </cofactor>
    <text evidence="2">Binds 2 FMN per homodimer. The occupancy is 1.3-1.9.</text>
</comment>
<comment type="subunit">
    <text>Homodimer.</text>
</comment>
<comment type="induction">
    <text>Constitutively expressed.</text>
</comment>
<comment type="similarity">
    <text evidence="3">In the N-terminal section; belongs to the flavodoxin reductase family.</text>
</comment>
<keyword id="KW-0249">Electron transport</keyword>
<keyword id="KW-0285">Flavoprotein</keyword>
<keyword id="KW-0288">FMN</keyword>
<keyword id="KW-0408">Iron</keyword>
<keyword id="KW-0479">Metal-binding</keyword>
<keyword id="KW-0560">Oxidoreductase</keyword>
<keyword id="KW-0813">Transport</keyword>
<evidence type="ECO:0000255" key="1">
    <source>
        <dbReference type="PROSITE-ProRule" id="PRU00241"/>
    </source>
</evidence>
<evidence type="ECO:0000269" key="2">
    <source>
    </source>
</evidence>
<evidence type="ECO:0000305" key="3"/>
<name>HRB_MOOTA</name>
<protein>
    <recommendedName>
        <fullName>High molecular weight rubredoxin</fullName>
    </recommendedName>
    <alternativeName>
        <fullName>Nitric oxide reductase NADH:FprA oxidoreductase</fullName>
    </alternativeName>
</protein>
<sequence>MDTKALHTLTYGLYIITAKKGDRFNGQVANTVFQITSDPPTIAVSINKQNLTHEFIQAGQGFVISVLAREVPLSLIGQFGFKSGREMDKFAGINYKLSEGGLPYLADHTLAYLEASLNQTVDAGTHSIFIGTVTDAAVLLQGEPMTYAYYHQVKRGTTPKTAPTFTVGREKDKTALASPKYQCTICNYVYDPVQGDPEHGIAPGTPFADLPEDWTCPICGAGKDAFEQI</sequence>
<reference key="1">
    <citation type="journal article" date="2001" name="J. Bacteriol.">
        <title>Five-gene cluster in Clostridium thermoaceticum consisting of two divergent operons encoding rubredoxin oxidoreductase-rubredoxin and rubrerythrin-type A flavoprotein- high-molecular-weight rubredoxin.</title>
        <authorList>
            <person name="Das A."/>
            <person name="Coulter E.D."/>
            <person name="Kurtz D.M. Jr."/>
            <person name="Ljungdahl L.G."/>
        </authorList>
    </citation>
    <scope>NUCLEOTIDE SEQUENCE [GENOMIC DNA]</scope>
</reference>
<reference key="2">
    <citation type="journal article" date="2008" name="Environ. Microbiol.">
        <title>The complete genome sequence of Moorella thermoacetica (f. Clostridium thermoaceticum).</title>
        <authorList>
            <person name="Pierce E."/>
            <person name="Xie G."/>
            <person name="Barabote R.D."/>
            <person name="Saunders E."/>
            <person name="Han C.S."/>
            <person name="Detter J.C."/>
            <person name="Richardson P."/>
            <person name="Brettin T.S."/>
            <person name="Das A."/>
            <person name="Ljungdahl L.G."/>
            <person name="Ragsdale S.W."/>
        </authorList>
    </citation>
    <scope>NUCLEOTIDE SEQUENCE [LARGE SCALE GENOMIC DNA]</scope>
    <source>
        <strain>ATCC 39073 / JCM 9320</strain>
    </source>
</reference>
<reference key="3">
    <citation type="journal article" date="2003" name="Biochemistry">
        <title>A flavodiiron protein and high molecular weight rubredoxin from Moorella thermoacetica with nitric oxide reductase activity.</title>
        <authorList>
            <person name="Silaghi-Dumitrescu R."/>
            <person name="Coulter E.D."/>
            <person name="Das A."/>
            <person name="Ljungdahl L.G."/>
            <person name="Jameson G.N.L."/>
            <person name="Huynh B.H."/>
            <person name="Kurtz D.M. Jr."/>
        </authorList>
    </citation>
    <scope>CHARACTERIZATION</scope>
    <scope>COFACTOR</scope>
</reference>
<dbReference type="EMBL" id="AF202316">
    <property type="protein sequence ID" value="AAG00803.1"/>
    <property type="molecule type" value="Genomic_DNA"/>
</dbReference>
<dbReference type="EMBL" id="CP000232">
    <property type="protein sequence ID" value="ABC19602.1"/>
    <property type="molecule type" value="Genomic_DNA"/>
</dbReference>
<dbReference type="RefSeq" id="YP_430145.1">
    <property type="nucleotide sequence ID" value="NC_007644.1"/>
</dbReference>
<dbReference type="SMR" id="Q9FDN6"/>
<dbReference type="STRING" id="264732.Moth_1288"/>
<dbReference type="EnsemblBacteria" id="ABC19602">
    <property type="protein sequence ID" value="ABC19602"/>
    <property type="gene ID" value="Moth_1288"/>
</dbReference>
<dbReference type="GeneID" id="89363153"/>
<dbReference type="KEGG" id="mta:Moth_1288"/>
<dbReference type="PATRIC" id="fig|264732.11.peg.1382"/>
<dbReference type="eggNOG" id="COG1773">
    <property type="taxonomic scope" value="Bacteria"/>
</dbReference>
<dbReference type="eggNOG" id="COG1853">
    <property type="taxonomic scope" value="Bacteria"/>
</dbReference>
<dbReference type="HOGENOM" id="CLU_059021_4_1_9"/>
<dbReference type="OrthoDB" id="9799749at2"/>
<dbReference type="GO" id="GO:0009055">
    <property type="term" value="F:electron transfer activity"/>
    <property type="evidence" value="ECO:0007669"/>
    <property type="project" value="TreeGrafter"/>
</dbReference>
<dbReference type="GO" id="GO:0010181">
    <property type="term" value="F:FMN binding"/>
    <property type="evidence" value="ECO:0007669"/>
    <property type="project" value="InterPro"/>
</dbReference>
<dbReference type="GO" id="GO:0005506">
    <property type="term" value="F:iron ion binding"/>
    <property type="evidence" value="ECO:0007669"/>
    <property type="project" value="InterPro"/>
</dbReference>
<dbReference type="GO" id="GO:0016646">
    <property type="term" value="F:oxidoreductase activity, acting on the CH-NH group of donors, NAD or NADP as acceptor"/>
    <property type="evidence" value="ECO:0007669"/>
    <property type="project" value="UniProtKB-ARBA"/>
</dbReference>
<dbReference type="GO" id="GO:0043448">
    <property type="term" value="P:alkane catabolic process"/>
    <property type="evidence" value="ECO:0007669"/>
    <property type="project" value="TreeGrafter"/>
</dbReference>
<dbReference type="CDD" id="cd00730">
    <property type="entry name" value="rubredoxin"/>
    <property type="match status" value="1"/>
</dbReference>
<dbReference type="FunFam" id="2.20.28.10:FF:000001">
    <property type="entry name" value="Rubredoxin"/>
    <property type="match status" value="1"/>
</dbReference>
<dbReference type="Gene3D" id="2.20.28.10">
    <property type="match status" value="1"/>
</dbReference>
<dbReference type="Gene3D" id="2.30.110.10">
    <property type="entry name" value="Electron Transport, Fmn-binding Protein, Chain A"/>
    <property type="match status" value="1"/>
</dbReference>
<dbReference type="InterPro" id="IPR002563">
    <property type="entry name" value="Flavin_Rdtase-like_dom"/>
</dbReference>
<dbReference type="InterPro" id="IPR024934">
    <property type="entry name" value="Rubredoxin-like_dom"/>
</dbReference>
<dbReference type="InterPro" id="IPR024935">
    <property type="entry name" value="Rubredoxin_dom"/>
</dbReference>
<dbReference type="InterPro" id="IPR050526">
    <property type="entry name" value="Rubredoxin_ET"/>
</dbReference>
<dbReference type="InterPro" id="IPR018527">
    <property type="entry name" value="Rubredoxin_Fe_BS"/>
</dbReference>
<dbReference type="InterPro" id="IPR012349">
    <property type="entry name" value="Split_barrel_FMN-bd"/>
</dbReference>
<dbReference type="NCBIfam" id="NF045768">
    <property type="entry name" value="RubredRD"/>
    <property type="match status" value="1"/>
</dbReference>
<dbReference type="PANTHER" id="PTHR47627">
    <property type="entry name" value="RUBREDOXIN"/>
    <property type="match status" value="1"/>
</dbReference>
<dbReference type="PANTHER" id="PTHR47627:SF1">
    <property type="entry name" value="RUBREDOXIN-1-RELATED"/>
    <property type="match status" value="1"/>
</dbReference>
<dbReference type="Pfam" id="PF01613">
    <property type="entry name" value="Flavin_Reduct"/>
    <property type="match status" value="1"/>
</dbReference>
<dbReference type="Pfam" id="PF00301">
    <property type="entry name" value="Rubredoxin"/>
    <property type="match status" value="1"/>
</dbReference>
<dbReference type="PRINTS" id="PR00163">
    <property type="entry name" value="RUBREDOXIN"/>
</dbReference>
<dbReference type="SMART" id="SM00903">
    <property type="entry name" value="Flavin_Reduct"/>
    <property type="match status" value="1"/>
</dbReference>
<dbReference type="SUPFAM" id="SSF50475">
    <property type="entry name" value="FMN-binding split barrel"/>
    <property type="match status" value="1"/>
</dbReference>
<dbReference type="SUPFAM" id="SSF57802">
    <property type="entry name" value="Rubredoxin-like"/>
    <property type="match status" value="1"/>
</dbReference>
<dbReference type="PROSITE" id="PS00202">
    <property type="entry name" value="RUBREDOXIN"/>
    <property type="match status" value="1"/>
</dbReference>
<dbReference type="PROSITE" id="PS50903">
    <property type="entry name" value="RUBREDOXIN_LIKE"/>
    <property type="match status" value="1"/>
</dbReference>
<gene>
    <name type="primary">hrb</name>
    <name type="ordered locus">Moth_1288</name>
</gene>
<organism>
    <name type="scientific">Moorella thermoacetica (strain ATCC 39073 / JCM 9320)</name>
    <dbReference type="NCBI Taxonomy" id="264732"/>
    <lineage>
        <taxon>Bacteria</taxon>
        <taxon>Bacillati</taxon>
        <taxon>Bacillota</taxon>
        <taxon>Clostridia</taxon>
        <taxon>Moorellales</taxon>
        <taxon>Moorellaceae</taxon>
        <taxon>Moorella</taxon>
    </lineage>
</organism>
<proteinExistence type="evidence at protein level"/>
<feature type="chain" id="PRO_0000135073" description="High molecular weight rubredoxin">
    <location>
        <begin position="1"/>
        <end position="229"/>
    </location>
</feature>
<feature type="domain" description="Rubredoxin-like" evidence="1">
    <location>
        <begin position="178"/>
        <end position="229"/>
    </location>
</feature>
<feature type="region of interest" description="Flavodoxin-reductase-like">
    <location>
        <begin position="1"/>
        <end position="158"/>
    </location>
</feature>
<feature type="binding site" evidence="3">
    <location>
        <position position="183"/>
    </location>
    <ligand>
        <name>Fe cation</name>
        <dbReference type="ChEBI" id="CHEBI:24875"/>
    </ligand>
</feature>
<feature type="binding site" evidence="3">
    <location>
        <position position="186"/>
    </location>
    <ligand>
        <name>Fe cation</name>
        <dbReference type="ChEBI" id="CHEBI:24875"/>
    </ligand>
</feature>
<feature type="binding site" evidence="3">
    <location>
        <position position="216"/>
    </location>
    <ligand>
        <name>Fe cation</name>
        <dbReference type="ChEBI" id="CHEBI:24875"/>
    </ligand>
</feature>
<feature type="binding site" evidence="3">
    <location>
        <position position="219"/>
    </location>
    <ligand>
        <name>Fe cation</name>
        <dbReference type="ChEBI" id="CHEBI:24875"/>
    </ligand>
</feature>
<accession>Q9FDN6</accession>
<accession>Q2RIY7</accession>